<comment type="similarity">
    <text evidence="1">Belongs to the universal ribosomal protein uL29 family.</text>
</comment>
<protein>
    <recommendedName>
        <fullName evidence="1">Large ribosomal subunit protein uL29</fullName>
    </recommendedName>
    <alternativeName>
        <fullName evidence="2">50S ribosomal protein L29</fullName>
    </alternativeName>
</protein>
<gene>
    <name evidence="1" type="primary">rpmC</name>
    <name type="ordered locus">TPASS_0197</name>
</gene>
<name>RL29_TREPS</name>
<evidence type="ECO:0000255" key="1">
    <source>
        <dbReference type="HAMAP-Rule" id="MF_00374"/>
    </source>
</evidence>
<evidence type="ECO:0000305" key="2"/>
<dbReference type="EMBL" id="CP000805">
    <property type="protein sequence ID" value="ACD70623.1"/>
    <property type="molecule type" value="Genomic_DNA"/>
</dbReference>
<dbReference type="RefSeq" id="WP_010881644.1">
    <property type="nucleotide sequence ID" value="NC_021508.1"/>
</dbReference>
<dbReference type="SMR" id="B2S2E4"/>
<dbReference type="GeneID" id="93875985"/>
<dbReference type="KEGG" id="tpp:TPASS_0197"/>
<dbReference type="PATRIC" id="fig|455434.6.peg.200"/>
<dbReference type="Proteomes" id="UP000001202">
    <property type="component" value="Chromosome"/>
</dbReference>
<dbReference type="GO" id="GO:1990904">
    <property type="term" value="C:ribonucleoprotein complex"/>
    <property type="evidence" value="ECO:0007669"/>
    <property type="project" value="UniProtKB-KW"/>
</dbReference>
<dbReference type="GO" id="GO:0005840">
    <property type="term" value="C:ribosome"/>
    <property type="evidence" value="ECO:0007669"/>
    <property type="project" value="UniProtKB-KW"/>
</dbReference>
<dbReference type="GO" id="GO:0003735">
    <property type="term" value="F:structural constituent of ribosome"/>
    <property type="evidence" value="ECO:0007669"/>
    <property type="project" value="InterPro"/>
</dbReference>
<dbReference type="GO" id="GO:0006412">
    <property type="term" value="P:translation"/>
    <property type="evidence" value="ECO:0007669"/>
    <property type="project" value="UniProtKB-UniRule"/>
</dbReference>
<dbReference type="Gene3D" id="1.10.287.310">
    <property type="match status" value="1"/>
</dbReference>
<dbReference type="HAMAP" id="MF_00374">
    <property type="entry name" value="Ribosomal_uL29"/>
    <property type="match status" value="1"/>
</dbReference>
<dbReference type="InterPro" id="IPR001854">
    <property type="entry name" value="Ribosomal_uL29"/>
</dbReference>
<dbReference type="InterPro" id="IPR036049">
    <property type="entry name" value="Ribosomal_uL29_sf"/>
</dbReference>
<dbReference type="NCBIfam" id="TIGR00012">
    <property type="entry name" value="L29"/>
    <property type="match status" value="1"/>
</dbReference>
<dbReference type="Pfam" id="PF00831">
    <property type="entry name" value="Ribosomal_L29"/>
    <property type="match status" value="1"/>
</dbReference>
<dbReference type="SUPFAM" id="SSF46561">
    <property type="entry name" value="Ribosomal protein L29 (L29p)"/>
    <property type="match status" value="1"/>
</dbReference>
<keyword id="KW-0687">Ribonucleoprotein</keyword>
<keyword id="KW-0689">Ribosomal protein</keyword>
<feature type="chain" id="PRO_1000121835" description="Large ribosomal subunit protein uL29">
    <location>
        <begin position="1"/>
        <end position="72"/>
    </location>
</feature>
<proteinExistence type="inferred from homology"/>
<reference key="1">
    <citation type="journal article" date="2008" name="BMC Microbiol.">
        <title>Complete genome sequence of Treponema pallidum ssp. pallidum strain SS14 determined with oligonucleotide arrays.</title>
        <authorList>
            <person name="Matejkova P."/>
            <person name="Strouhal M."/>
            <person name="Smajs D."/>
            <person name="Norris S.J."/>
            <person name="Palzkill T."/>
            <person name="Petrosino J.F."/>
            <person name="Sodergren E."/>
            <person name="Norton J.E."/>
            <person name="Singh J."/>
            <person name="Richmond T.A."/>
            <person name="Molla M.N."/>
            <person name="Albert T.J."/>
            <person name="Weinstock G.M."/>
        </authorList>
    </citation>
    <scope>NUCLEOTIDE SEQUENCE [LARGE SCALE GENOMIC DNA]</scope>
    <source>
        <strain>SS14</strain>
    </source>
</reference>
<sequence>MGRGGCAQLSYSELLSRRRELERKYLDLRFQLVVEHVDNKLMKRILRRQIAAVNTFLRHKELTELEKRGVRE</sequence>
<organism>
    <name type="scientific">Treponema pallidum subsp. pallidum (strain SS14)</name>
    <dbReference type="NCBI Taxonomy" id="455434"/>
    <lineage>
        <taxon>Bacteria</taxon>
        <taxon>Pseudomonadati</taxon>
        <taxon>Spirochaetota</taxon>
        <taxon>Spirochaetia</taxon>
        <taxon>Spirochaetales</taxon>
        <taxon>Treponemataceae</taxon>
        <taxon>Treponema</taxon>
    </lineage>
</organism>
<accession>B2S2E4</accession>